<accession>Q5RFL5</accession>
<name>ELOV5_PONAB</name>
<proteinExistence type="evidence at transcript level"/>
<keyword id="KW-0007">Acetylation</keyword>
<keyword id="KW-0966">Cell projection</keyword>
<keyword id="KW-0256">Endoplasmic reticulum</keyword>
<keyword id="KW-0275">Fatty acid biosynthesis</keyword>
<keyword id="KW-0276">Fatty acid metabolism</keyword>
<keyword id="KW-0444">Lipid biosynthesis</keyword>
<keyword id="KW-0443">Lipid metabolism</keyword>
<keyword id="KW-0472">Membrane</keyword>
<keyword id="KW-0597">Phosphoprotein</keyword>
<keyword id="KW-1185">Reference proteome</keyword>
<keyword id="KW-0808">Transferase</keyword>
<keyword id="KW-0812">Transmembrane</keyword>
<keyword id="KW-1133">Transmembrane helix</keyword>
<feature type="chain" id="PRO_0000282841" description="Very long chain fatty acid elongase 5">
    <location>
        <begin position="1"/>
        <end position="299"/>
    </location>
</feature>
<feature type="transmembrane region" description="Helical" evidence="3">
    <location>
        <begin position="26"/>
        <end position="46"/>
    </location>
</feature>
<feature type="transmembrane region" description="Helical" evidence="3">
    <location>
        <begin position="64"/>
        <end position="84"/>
    </location>
</feature>
<feature type="transmembrane region" description="Helical" evidence="3">
    <location>
        <begin position="112"/>
        <end position="132"/>
    </location>
</feature>
<feature type="transmembrane region" description="Helical" evidence="3">
    <location>
        <begin position="150"/>
        <end position="170"/>
    </location>
</feature>
<feature type="transmembrane region" description="Helical" evidence="3">
    <location>
        <begin position="172"/>
        <end position="192"/>
    </location>
</feature>
<feature type="transmembrane region" description="Helical" evidence="3">
    <location>
        <begin position="205"/>
        <end position="225"/>
    </location>
</feature>
<feature type="transmembrane region" description="Helical" evidence="3">
    <location>
        <begin position="226"/>
        <end position="246"/>
    </location>
</feature>
<feature type="region of interest" description="Disordered" evidence="4">
    <location>
        <begin position="262"/>
        <end position="299"/>
    </location>
</feature>
<feature type="compositionally biased region" description="Polar residues" evidence="4">
    <location>
        <begin position="279"/>
        <end position="288"/>
    </location>
</feature>
<feature type="modified residue" description="N-acetylmethionine" evidence="2">
    <location>
        <position position="1"/>
    </location>
</feature>
<feature type="modified residue" description="Phosphoserine" evidence="2">
    <location>
        <position position="285"/>
    </location>
</feature>
<sequence length="299" mass="35305">MEHFDASLSTYFKAWLGPRDTRVKGWFLLDNYIPTFICSVIYLLIVWLGPKYMRNKQPFSCRGILVVYNLGLTLLSLYMFCELVTGVWEGKYNFFCQGTRTAGESDMKIIRVLWWYYFSKLIEFMDTFFFILRKNNHQITVLHVYHHASMLNIWWFVMNWVPCGHSYFGATLNSFIHVLMYSYYGLSSVLSMRPYLWWKKYITQGQLLQSVLTIIQTSCGVIWPCTFPLGWLYFQIGYMISLIALFTNFYIQSYNKKGASRRKDHLKDHQNGSKAAVNGHTNSFSPLENNVKPRKLRKD</sequence>
<protein>
    <recommendedName>
        <fullName evidence="3">Very long chain fatty acid elongase 5</fullName>
        <ecNumber evidence="2 3">2.3.1.199</ecNumber>
    </recommendedName>
    <alternativeName>
        <fullName evidence="3">3-keto acyl-CoA synthase ELOVL5</fullName>
    </alternativeName>
    <alternativeName>
        <fullName evidence="3">ELOVL fatty acid elongase 5</fullName>
        <shortName evidence="3">ELOVL FA elongase 5</shortName>
    </alternativeName>
    <alternativeName>
        <fullName evidence="3">Elongation of very long chain fatty acids protein 5</fullName>
    </alternativeName>
    <alternativeName>
        <fullName evidence="3">Very long chain 3-ketoacyl-CoA synthase 5</fullName>
    </alternativeName>
    <alternativeName>
        <fullName evidence="3">Very long chain 3-oxoacyl-CoA synthase 5</fullName>
    </alternativeName>
</protein>
<organism>
    <name type="scientific">Pongo abelii</name>
    <name type="common">Sumatran orangutan</name>
    <name type="synonym">Pongo pygmaeus abelii</name>
    <dbReference type="NCBI Taxonomy" id="9601"/>
    <lineage>
        <taxon>Eukaryota</taxon>
        <taxon>Metazoa</taxon>
        <taxon>Chordata</taxon>
        <taxon>Craniata</taxon>
        <taxon>Vertebrata</taxon>
        <taxon>Euteleostomi</taxon>
        <taxon>Mammalia</taxon>
        <taxon>Eutheria</taxon>
        <taxon>Euarchontoglires</taxon>
        <taxon>Primates</taxon>
        <taxon>Haplorrhini</taxon>
        <taxon>Catarrhini</taxon>
        <taxon>Hominidae</taxon>
        <taxon>Pongo</taxon>
    </lineage>
</organism>
<evidence type="ECO:0000250" key="1">
    <source>
        <dbReference type="UniProtKB" id="Q8BHI7"/>
    </source>
</evidence>
<evidence type="ECO:0000250" key="2">
    <source>
        <dbReference type="UniProtKB" id="Q9NYP7"/>
    </source>
</evidence>
<evidence type="ECO:0000255" key="3">
    <source>
        <dbReference type="HAMAP-Rule" id="MF_03205"/>
    </source>
</evidence>
<evidence type="ECO:0000256" key="4">
    <source>
        <dbReference type="SAM" id="MobiDB-lite"/>
    </source>
</evidence>
<reference key="1">
    <citation type="submission" date="2004-11" db="EMBL/GenBank/DDBJ databases">
        <authorList>
            <consortium name="The German cDNA consortium"/>
        </authorList>
    </citation>
    <scope>NUCLEOTIDE SEQUENCE [LARGE SCALE MRNA]</scope>
    <source>
        <tissue>Kidney</tissue>
    </source>
</reference>
<dbReference type="EC" id="2.3.1.199" evidence="2 3"/>
<dbReference type="EMBL" id="CR857140">
    <property type="protein sequence ID" value="CAH89442.1"/>
    <property type="molecule type" value="mRNA"/>
</dbReference>
<dbReference type="RefSeq" id="NP_001127147.1">
    <property type="nucleotide sequence ID" value="NM_001133675.1"/>
</dbReference>
<dbReference type="SMR" id="Q5RFL5"/>
<dbReference type="STRING" id="9601.ENSPPYP00000018703"/>
<dbReference type="GeneID" id="100174198"/>
<dbReference type="KEGG" id="pon:100174198"/>
<dbReference type="CTD" id="60481"/>
<dbReference type="eggNOG" id="KOG3071">
    <property type="taxonomic scope" value="Eukaryota"/>
</dbReference>
<dbReference type="InParanoid" id="Q5RFL5"/>
<dbReference type="OrthoDB" id="434092at2759"/>
<dbReference type="UniPathway" id="UPA00658"/>
<dbReference type="Proteomes" id="UP000001595">
    <property type="component" value="Unplaced"/>
</dbReference>
<dbReference type="GO" id="GO:0030425">
    <property type="term" value="C:dendrite"/>
    <property type="evidence" value="ECO:0007669"/>
    <property type="project" value="UniProtKB-SubCell"/>
</dbReference>
<dbReference type="GO" id="GO:0097447">
    <property type="term" value="C:dendritic tree"/>
    <property type="evidence" value="ECO:0000250"/>
    <property type="project" value="UniProtKB"/>
</dbReference>
<dbReference type="GO" id="GO:0005789">
    <property type="term" value="C:endoplasmic reticulum membrane"/>
    <property type="evidence" value="ECO:0007669"/>
    <property type="project" value="UniProtKB-SubCell"/>
</dbReference>
<dbReference type="GO" id="GO:0043025">
    <property type="term" value="C:neuronal cell body"/>
    <property type="evidence" value="ECO:0000250"/>
    <property type="project" value="UniProtKB"/>
</dbReference>
<dbReference type="GO" id="GO:0009922">
    <property type="term" value="F:fatty acid elongase activity"/>
    <property type="evidence" value="ECO:0000250"/>
    <property type="project" value="UniProtKB"/>
</dbReference>
<dbReference type="GO" id="GO:0034625">
    <property type="term" value="P:fatty acid elongation, monounsaturated fatty acid"/>
    <property type="evidence" value="ECO:0000250"/>
    <property type="project" value="UniProtKB"/>
</dbReference>
<dbReference type="GO" id="GO:0034626">
    <property type="term" value="P:fatty acid elongation, polyunsaturated fatty acid"/>
    <property type="evidence" value="ECO:0000250"/>
    <property type="project" value="UniProtKB"/>
</dbReference>
<dbReference type="GO" id="GO:0019367">
    <property type="term" value="P:fatty acid elongation, saturated fatty acid"/>
    <property type="evidence" value="ECO:0007669"/>
    <property type="project" value="InterPro"/>
</dbReference>
<dbReference type="GO" id="GO:0035338">
    <property type="term" value="P:long-chain fatty-acyl-CoA biosynthetic process"/>
    <property type="evidence" value="ECO:0007669"/>
    <property type="project" value="UniProtKB-UniRule"/>
</dbReference>
<dbReference type="GO" id="GO:0030148">
    <property type="term" value="P:sphingolipid biosynthetic process"/>
    <property type="evidence" value="ECO:0007669"/>
    <property type="project" value="TreeGrafter"/>
</dbReference>
<dbReference type="GO" id="GO:0006636">
    <property type="term" value="P:unsaturated fatty acid biosynthetic process"/>
    <property type="evidence" value="ECO:0007669"/>
    <property type="project" value="UniProtKB-UniRule"/>
</dbReference>
<dbReference type="GO" id="GO:0042761">
    <property type="term" value="P:very long-chain fatty acid biosynthetic process"/>
    <property type="evidence" value="ECO:0000250"/>
    <property type="project" value="UniProtKB"/>
</dbReference>
<dbReference type="HAMAP" id="MF_03205">
    <property type="entry name" value="VLCF_elongase_5"/>
    <property type="match status" value="1"/>
</dbReference>
<dbReference type="InterPro" id="IPR002076">
    <property type="entry name" value="ELO_fam"/>
</dbReference>
<dbReference type="InterPro" id="IPR033677">
    <property type="entry name" value="ELOVL5"/>
</dbReference>
<dbReference type="PANTHER" id="PTHR11157:SF18">
    <property type="entry name" value="ELONGATION OF VERY LONG CHAIN FATTY ACIDS PROTEIN 5"/>
    <property type="match status" value="1"/>
</dbReference>
<dbReference type="PANTHER" id="PTHR11157">
    <property type="entry name" value="FATTY ACID ACYL TRANSFERASE-RELATED"/>
    <property type="match status" value="1"/>
</dbReference>
<dbReference type="Pfam" id="PF01151">
    <property type="entry name" value="ELO"/>
    <property type="match status" value="1"/>
</dbReference>
<gene>
    <name evidence="3" type="primary">ELOVL5</name>
</gene>
<comment type="function">
    <text evidence="1 3">Catalyzes the first and rate-limiting reaction of the four reactions that constitute the long-chain fatty acids elongation cycle. This endoplasmic reticulum-bound enzymatic process allows the addition of 2 carbons to the chain of long- and very long-chain fatty acids (VLCFAs) per cycle. Condensing enzyme that acts specifically toward polyunsaturated acyl-CoA with the higher activity toward C18:3(n-6) acyl-CoA. May participate in the production of monounsaturated and of polyunsaturated VLCFAs of different chain lengths that are involved in multiple biological processes as precursors of membrane lipids and lipid mediators (By similarity). In conditions where the essential linoleic and alpha linoleic fatty acids are lacking it is also involved in the synthesis of Mead acid from oleic acid (By similarity).</text>
</comment>
<comment type="catalytic activity">
    <reaction evidence="3">
        <text>a very-long-chain acyl-CoA + malonyl-CoA + H(+) = a very-long-chain 3-oxoacyl-CoA + CO2 + CoA</text>
        <dbReference type="Rhea" id="RHEA:32727"/>
        <dbReference type="ChEBI" id="CHEBI:15378"/>
        <dbReference type="ChEBI" id="CHEBI:16526"/>
        <dbReference type="ChEBI" id="CHEBI:57287"/>
        <dbReference type="ChEBI" id="CHEBI:57384"/>
        <dbReference type="ChEBI" id="CHEBI:90725"/>
        <dbReference type="ChEBI" id="CHEBI:90736"/>
        <dbReference type="EC" id="2.3.1.199"/>
    </reaction>
    <physiologicalReaction direction="left-to-right" evidence="2">
        <dbReference type="Rhea" id="RHEA:32728"/>
    </physiologicalReaction>
</comment>
<comment type="catalytic activity">
    <reaction evidence="2">
        <text>(6Z,9Z,12Z)-octadecatrienoyl-CoA + malonyl-CoA + H(+) = (8Z,11Z,14Z)-3-oxoeicosatrienoyl-CoA + CO2 + CoA</text>
        <dbReference type="Rhea" id="RHEA:35379"/>
        <dbReference type="ChEBI" id="CHEBI:15378"/>
        <dbReference type="ChEBI" id="CHEBI:16526"/>
        <dbReference type="ChEBI" id="CHEBI:57287"/>
        <dbReference type="ChEBI" id="CHEBI:57363"/>
        <dbReference type="ChEBI" id="CHEBI:57384"/>
        <dbReference type="ChEBI" id="CHEBI:71481"/>
    </reaction>
    <physiologicalReaction direction="left-to-right" evidence="2">
        <dbReference type="Rhea" id="RHEA:35380"/>
    </physiologicalReaction>
</comment>
<comment type="catalytic activity">
    <reaction evidence="2">
        <text>(9Z,12Z,15Z)-octadecatrienoyl-CoA + malonyl-CoA + H(+) = (11Z,14Z,17Z)-3-oxoeicosatrienoyl-CoA + CO2 + CoA</text>
        <dbReference type="Rhea" id="RHEA:36523"/>
        <dbReference type="ChEBI" id="CHEBI:15378"/>
        <dbReference type="ChEBI" id="CHEBI:16526"/>
        <dbReference type="ChEBI" id="CHEBI:57287"/>
        <dbReference type="ChEBI" id="CHEBI:57384"/>
        <dbReference type="ChEBI" id="CHEBI:74034"/>
        <dbReference type="ChEBI" id="CHEBI:74054"/>
    </reaction>
    <physiologicalReaction direction="left-to-right" evidence="2">
        <dbReference type="Rhea" id="RHEA:36524"/>
    </physiologicalReaction>
</comment>
<comment type="catalytic activity">
    <reaction evidence="2">
        <text>(9Z)-hexadecenoyl-CoA + malonyl-CoA + H(+) = 3-oxo-(11Z)-octadecenoyl-CoA + CO2 + CoA</text>
        <dbReference type="Rhea" id="RHEA:39675"/>
        <dbReference type="ChEBI" id="CHEBI:15378"/>
        <dbReference type="ChEBI" id="CHEBI:16526"/>
        <dbReference type="ChEBI" id="CHEBI:57287"/>
        <dbReference type="ChEBI" id="CHEBI:57384"/>
        <dbReference type="ChEBI" id="CHEBI:61540"/>
        <dbReference type="ChEBI" id="CHEBI:76555"/>
    </reaction>
    <physiologicalReaction direction="left-to-right" evidence="2">
        <dbReference type="Rhea" id="RHEA:39676"/>
    </physiologicalReaction>
</comment>
<comment type="catalytic activity">
    <reaction evidence="2">
        <text>(9Z)-octadecenoyl-CoA + malonyl-CoA + H(+) = 3-oxo-(11Z)-eicosenoyl-CoA + CO2 + CoA</text>
        <dbReference type="Rhea" id="RHEA:36511"/>
        <dbReference type="ChEBI" id="CHEBI:15378"/>
        <dbReference type="ChEBI" id="CHEBI:16526"/>
        <dbReference type="ChEBI" id="CHEBI:57287"/>
        <dbReference type="ChEBI" id="CHEBI:57384"/>
        <dbReference type="ChEBI" id="CHEBI:57387"/>
        <dbReference type="ChEBI" id="CHEBI:74011"/>
    </reaction>
    <physiologicalReaction direction="left-to-right" evidence="2">
        <dbReference type="Rhea" id="RHEA:36512"/>
    </physiologicalReaction>
</comment>
<comment type="catalytic activity">
    <reaction evidence="2">
        <text>(11Z)-octadecenoyl-CoA + malonyl-CoA + H(+) = 3-oxo-(13Z)-eicosenoyl-CoA + CO2 + CoA</text>
        <dbReference type="Rhea" id="RHEA:39679"/>
        <dbReference type="ChEBI" id="CHEBI:15378"/>
        <dbReference type="ChEBI" id="CHEBI:16526"/>
        <dbReference type="ChEBI" id="CHEBI:57287"/>
        <dbReference type="ChEBI" id="CHEBI:57384"/>
        <dbReference type="ChEBI" id="CHEBI:75121"/>
        <dbReference type="ChEBI" id="CHEBI:76559"/>
    </reaction>
    <physiologicalReaction direction="left-to-right" evidence="2">
        <dbReference type="Rhea" id="RHEA:39680"/>
    </physiologicalReaction>
</comment>
<comment type="catalytic activity">
    <reaction evidence="2">
        <text>(9Z,12Z)-octadecadienoyl-CoA + malonyl-CoA + H(+) = (11Z,14Z)-3-oxoicosa-11,14-dienoyl-CoA + CO2 + CoA</text>
        <dbReference type="Rhea" id="RHEA:36503"/>
        <dbReference type="ChEBI" id="CHEBI:15378"/>
        <dbReference type="ChEBI" id="CHEBI:16526"/>
        <dbReference type="ChEBI" id="CHEBI:57287"/>
        <dbReference type="ChEBI" id="CHEBI:57383"/>
        <dbReference type="ChEBI" id="CHEBI:57384"/>
        <dbReference type="ChEBI" id="CHEBI:74012"/>
    </reaction>
    <physiologicalReaction direction="left-to-right" evidence="2">
        <dbReference type="Rhea" id="RHEA:36504"/>
    </physiologicalReaction>
</comment>
<comment type="catalytic activity">
    <reaction evidence="2">
        <text>(6Z,9Z,12Z,15Z)-octadecatetraenoyl-CoA + malonyl-CoA + H(+) = (8Z,11Z,14Z,17Z)-3-oxoicosatetraenoyl-CoA + CO2 + CoA</text>
        <dbReference type="Rhea" id="RHEA:35391"/>
        <dbReference type="ChEBI" id="CHEBI:15378"/>
        <dbReference type="ChEBI" id="CHEBI:16526"/>
        <dbReference type="ChEBI" id="CHEBI:57287"/>
        <dbReference type="ChEBI" id="CHEBI:57384"/>
        <dbReference type="ChEBI" id="CHEBI:71489"/>
        <dbReference type="ChEBI" id="CHEBI:71491"/>
    </reaction>
    <physiologicalReaction direction="left-to-right" evidence="2">
        <dbReference type="Rhea" id="RHEA:35392"/>
    </physiologicalReaction>
</comment>
<comment type="catalytic activity">
    <reaction evidence="2">
        <text>(5Z,8Z,11Z,14Z)-eicosatetraenoyl-CoA + malonyl-CoA + H(+) = (7Z,10Z,13Z,16Z)-3-oxodocosatetraenoyl-CoA + CO2 + CoA</text>
        <dbReference type="Rhea" id="RHEA:36475"/>
        <dbReference type="ChEBI" id="CHEBI:15378"/>
        <dbReference type="ChEBI" id="CHEBI:16526"/>
        <dbReference type="ChEBI" id="CHEBI:57287"/>
        <dbReference type="ChEBI" id="CHEBI:57368"/>
        <dbReference type="ChEBI" id="CHEBI:57384"/>
        <dbReference type="ChEBI" id="CHEBI:73852"/>
    </reaction>
    <physiologicalReaction direction="left-to-right" evidence="2">
        <dbReference type="Rhea" id="RHEA:36476"/>
    </physiologicalReaction>
</comment>
<comment type="catalytic activity">
    <reaction evidence="2">
        <text>(5Z,8Z,11Z,14Z,17Z)-eicosapentaenoyl-CoA + malonyl-CoA + H(+) = 3-oxo-(7Z,10Z,13Z,16Z,19Z)-docosapentaenoyl-CoA + CO2 + CoA</text>
        <dbReference type="Rhea" id="RHEA:36483"/>
        <dbReference type="ChEBI" id="CHEBI:15378"/>
        <dbReference type="ChEBI" id="CHEBI:16526"/>
        <dbReference type="ChEBI" id="CHEBI:57287"/>
        <dbReference type="ChEBI" id="CHEBI:57384"/>
        <dbReference type="ChEBI" id="CHEBI:73862"/>
        <dbReference type="ChEBI" id="CHEBI:73863"/>
    </reaction>
    <physiologicalReaction direction="left-to-right" evidence="2">
        <dbReference type="Rhea" id="RHEA:36484"/>
    </physiologicalReaction>
</comment>
<comment type="pathway">
    <text evidence="3">Lipid metabolism; polyunsaturated fatty acid biosynthesis.</text>
</comment>
<comment type="subunit">
    <text evidence="2">Interacts with TECR.</text>
</comment>
<comment type="subcellular location">
    <subcellularLocation>
        <location evidence="3">Endoplasmic reticulum membrane</location>
        <topology evidence="3">Multi-pass membrane protein</topology>
    </subcellularLocation>
    <subcellularLocation>
        <location evidence="3">Cell projection</location>
        <location evidence="3">Dendrite</location>
    </subcellularLocation>
    <text evidence="3">In Purkinje cells, the protein localizes to the soma and proximal portion of the dendritic tree.</text>
</comment>
<comment type="similarity">
    <text evidence="3">Belongs to the ELO family. ELOVL5 subfamily.</text>
</comment>